<keyword id="KW-0963">Cytoplasm</keyword>
<keyword id="KW-1185">Reference proteome</keyword>
<keyword id="KW-0346">Stress response</keyword>
<proteinExistence type="inferred from homology"/>
<comment type="function">
    <text evidence="1">Involved in the degradation of certain denaturated proteins, including DnaA, during heat shock stress.</text>
</comment>
<comment type="subcellular location">
    <subcellularLocation>
        <location evidence="1">Cytoplasm</location>
    </subcellularLocation>
</comment>
<comment type="similarity">
    <text evidence="1">Belongs to the HspQ family.</text>
</comment>
<comment type="sequence caution" evidence="3">
    <conflict type="erroneous initiation">
        <sequence resource="EMBL-CDS" id="AAM86278"/>
    </conflict>
</comment>
<comment type="sequence caution" evidence="3">
    <conflict type="erroneous initiation">
        <sequence resource="EMBL-CDS" id="AAS61578"/>
    </conflict>
</comment>
<comment type="sequence caution" evidence="3">
    <conflict type="erroneous initiation">
        <sequence resource="EMBL-CDS" id="CAL20095"/>
    </conflict>
</comment>
<protein>
    <recommendedName>
        <fullName evidence="1">Heat shock protein HspQ</fullName>
    </recommendedName>
</protein>
<reference key="1">
    <citation type="journal article" date="2002" name="J. Bacteriol.">
        <title>Genome sequence of Yersinia pestis KIM.</title>
        <authorList>
            <person name="Deng W."/>
            <person name="Burland V."/>
            <person name="Plunkett G. III"/>
            <person name="Boutin A."/>
            <person name="Mayhew G.F."/>
            <person name="Liss P."/>
            <person name="Perna N.T."/>
            <person name="Rose D.J."/>
            <person name="Mau B."/>
            <person name="Zhou S."/>
            <person name="Schwartz D.C."/>
            <person name="Fetherston J.D."/>
            <person name="Lindler L.E."/>
            <person name="Brubaker R.R."/>
            <person name="Plano G.V."/>
            <person name="Straley S.C."/>
            <person name="McDonough K.A."/>
            <person name="Nilles M.L."/>
            <person name="Matson J.S."/>
            <person name="Blattner F.R."/>
            <person name="Perry R.D."/>
        </authorList>
    </citation>
    <scope>NUCLEOTIDE SEQUENCE [LARGE SCALE GENOMIC DNA]</scope>
    <source>
        <strain>KIM10+ / Biovar Mediaevalis</strain>
    </source>
</reference>
<reference key="2">
    <citation type="journal article" date="2001" name="Nature">
        <title>Genome sequence of Yersinia pestis, the causative agent of plague.</title>
        <authorList>
            <person name="Parkhill J."/>
            <person name="Wren B.W."/>
            <person name="Thomson N.R."/>
            <person name="Titball R.W."/>
            <person name="Holden M.T.G."/>
            <person name="Prentice M.B."/>
            <person name="Sebaihia M."/>
            <person name="James K.D."/>
            <person name="Churcher C.M."/>
            <person name="Mungall K.L."/>
            <person name="Baker S."/>
            <person name="Basham D."/>
            <person name="Bentley S.D."/>
            <person name="Brooks K."/>
            <person name="Cerdeno-Tarraga A.-M."/>
            <person name="Chillingworth T."/>
            <person name="Cronin A."/>
            <person name="Davies R.M."/>
            <person name="Davis P."/>
            <person name="Dougan G."/>
            <person name="Feltwell T."/>
            <person name="Hamlin N."/>
            <person name="Holroyd S."/>
            <person name="Jagels K."/>
            <person name="Karlyshev A.V."/>
            <person name="Leather S."/>
            <person name="Moule S."/>
            <person name="Oyston P.C.F."/>
            <person name="Quail M.A."/>
            <person name="Rutherford K.M."/>
            <person name="Simmonds M."/>
            <person name="Skelton J."/>
            <person name="Stevens K."/>
            <person name="Whitehead S."/>
            <person name="Barrell B.G."/>
        </authorList>
    </citation>
    <scope>NUCLEOTIDE SEQUENCE [LARGE SCALE GENOMIC DNA]</scope>
    <source>
        <strain>CO-92 / Biovar Orientalis</strain>
    </source>
</reference>
<reference key="3">
    <citation type="journal article" date="2004" name="DNA Res.">
        <title>Complete genome sequence of Yersinia pestis strain 91001, an isolate avirulent to humans.</title>
        <authorList>
            <person name="Song Y."/>
            <person name="Tong Z."/>
            <person name="Wang J."/>
            <person name="Wang L."/>
            <person name="Guo Z."/>
            <person name="Han Y."/>
            <person name="Zhang J."/>
            <person name="Pei D."/>
            <person name="Zhou D."/>
            <person name="Qin H."/>
            <person name="Pang X."/>
            <person name="Han Y."/>
            <person name="Zhai J."/>
            <person name="Li M."/>
            <person name="Cui B."/>
            <person name="Qi Z."/>
            <person name="Jin L."/>
            <person name="Dai R."/>
            <person name="Chen F."/>
            <person name="Li S."/>
            <person name="Ye C."/>
            <person name="Du Z."/>
            <person name="Lin W."/>
            <person name="Wang J."/>
            <person name="Yu J."/>
            <person name="Yang H."/>
            <person name="Wang J."/>
            <person name="Huang P."/>
            <person name="Yang R."/>
        </authorList>
    </citation>
    <scope>NUCLEOTIDE SEQUENCE [LARGE SCALE GENOMIC DNA]</scope>
    <source>
        <strain>91001 / Biovar Mediaevalis</strain>
    </source>
</reference>
<sequence length="105" mass="11763">MIASKFGIGQQVRHSLHGYLGVVIDIDPEYSLAPPEPDEVANNKTLRSSPWYHVVIEDDDGQPVHTYLAEAQLTYEDVDAHPEQPSLDELAASIRHQLQAPHLRN</sequence>
<gene>
    <name evidence="1" type="primary">hspQ</name>
    <name type="ordered locus">YPO1444</name>
    <name type="ordered locus">y2726</name>
    <name type="ordered locus">YP_1335</name>
</gene>
<organism>
    <name type="scientific">Yersinia pestis</name>
    <dbReference type="NCBI Taxonomy" id="632"/>
    <lineage>
        <taxon>Bacteria</taxon>
        <taxon>Pseudomonadati</taxon>
        <taxon>Pseudomonadota</taxon>
        <taxon>Gammaproteobacteria</taxon>
        <taxon>Enterobacterales</taxon>
        <taxon>Yersiniaceae</taxon>
        <taxon>Yersinia</taxon>
    </lineage>
</organism>
<accession>Q7CHM0</accession>
<accession>Q74VH4</accession>
<feature type="chain" id="PRO_0000315320" description="Heat shock protein HspQ">
    <location>
        <begin position="1"/>
        <end position="105"/>
    </location>
</feature>
<feature type="region of interest" description="Disordered" evidence="2">
    <location>
        <begin position="80"/>
        <end position="105"/>
    </location>
</feature>
<evidence type="ECO:0000255" key="1">
    <source>
        <dbReference type="HAMAP-Rule" id="MF_01194"/>
    </source>
</evidence>
<evidence type="ECO:0000256" key="2">
    <source>
        <dbReference type="SAM" id="MobiDB-lite"/>
    </source>
</evidence>
<evidence type="ECO:0000305" key="3"/>
<dbReference type="EMBL" id="AE009952">
    <property type="protein sequence ID" value="AAM86278.1"/>
    <property type="status" value="ALT_INIT"/>
    <property type="molecule type" value="Genomic_DNA"/>
</dbReference>
<dbReference type="EMBL" id="AE017042">
    <property type="protein sequence ID" value="AAS61578.1"/>
    <property type="status" value="ALT_INIT"/>
    <property type="molecule type" value="Genomic_DNA"/>
</dbReference>
<dbReference type="EMBL" id="AL590842">
    <property type="protein sequence ID" value="CAL20095.1"/>
    <property type="status" value="ALT_INIT"/>
    <property type="molecule type" value="Genomic_DNA"/>
</dbReference>
<dbReference type="PIR" id="AE0176">
    <property type="entry name" value="AE0176"/>
</dbReference>
<dbReference type="RefSeq" id="WP_002213054.1">
    <property type="nucleotide sequence ID" value="NZ_WUCM01000066.1"/>
</dbReference>
<dbReference type="RefSeq" id="YP_002346465.1">
    <property type="nucleotide sequence ID" value="NC_003143.1"/>
</dbReference>
<dbReference type="SMR" id="Q7CHM0"/>
<dbReference type="IntAct" id="Q7CHM0">
    <property type="interactions" value="1"/>
</dbReference>
<dbReference type="STRING" id="214092.YPO1444"/>
<dbReference type="PaxDb" id="214092-YPO1444"/>
<dbReference type="DNASU" id="1147673"/>
<dbReference type="EnsemblBacteria" id="AAS61578">
    <property type="protein sequence ID" value="AAS61578"/>
    <property type="gene ID" value="YP_1335"/>
</dbReference>
<dbReference type="GeneID" id="57977119"/>
<dbReference type="KEGG" id="ype:YPO1444"/>
<dbReference type="KEGG" id="ypk:y2726"/>
<dbReference type="KEGG" id="ypm:YP_1335"/>
<dbReference type="PATRIC" id="fig|214092.21.peg.1770"/>
<dbReference type="eggNOG" id="COG3785">
    <property type="taxonomic scope" value="Bacteria"/>
</dbReference>
<dbReference type="HOGENOM" id="CLU_123865_1_0_6"/>
<dbReference type="OMA" id="LRTAPWY"/>
<dbReference type="OrthoDB" id="9806050at2"/>
<dbReference type="Proteomes" id="UP000000815">
    <property type="component" value="Chromosome"/>
</dbReference>
<dbReference type="Proteomes" id="UP000001019">
    <property type="component" value="Chromosome"/>
</dbReference>
<dbReference type="Proteomes" id="UP000002490">
    <property type="component" value="Chromosome"/>
</dbReference>
<dbReference type="GO" id="GO:0005737">
    <property type="term" value="C:cytoplasm"/>
    <property type="evidence" value="ECO:0007669"/>
    <property type="project" value="UniProtKB-SubCell"/>
</dbReference>
<dbReference type="GO" id="GO:0003677">
    <property type="term" value="F:DNA binding"/>
    <property type="evidence" value="ECO:0007669"/>
    <property type="project" value="InterPro"/>
</dbReference>
<dbReference type="GO" id="GO:0009408">
    <property type="term" value="P:response to heat"/>
    <property type="evidence" value="ECO:0007669"/>
    <property type="project" value="UniProtKB-UniRule"/>
</dbReference>
<dbReference type="Gene3D" id="2.30.30.390">
    <property type="entry name" value="Hemimethylated DNA-binding domain"/>
    <property type="match status" value="1"/>
</dbReference>
<dbReference type="HAMAP" id="MF_01194">
    <property type="entry name" value="HspQ"/>
    <property type="match status" value="1"/>
</dbReference>
<dbReference type="InterPro" id="IPR011722">
    <property type="entry name" value="Hemimethylated_DNA-bd_dom"/>
</dbReference>
<dbReference type="InterPro" id="IPR036623">
    <property type="entry name" value="Hemimethylated_DNA-bd_sf"/>
</dbReference>
<dbReference type="InterPro" id="IPR022866">
    <property type="entry name" value="HspQ"/>
</dbReference>
<dbReference type="NCBIfam" id="NF010729">
    <property type="entry name" value="PRK14129.1"/>
    <property type="match status" value="1"/>
</dbReference>
<dbReference type="NCBIfam" id="TIGR02097">
    <property type="entry name" value="yccV"/>
    <property type="match status" value="1"/>
</dbReference>
<dbReference type="Pfam" id="PF08755">
    <property type="entry name" value="YccV-like"/>
    <property type="match status" value="1"/>
</dbReference>
<dbReference type="SMART" id="SM00992">
    <property type="entry name" value="YccV-like"/>
    <property type="match status" value="1"/>
</dbReference>
<dbReference type="SUPFAM" id="SSF141255">
    <property type="entry name" value="YccV-like"/>
    <property type="match status" value="1"/>
</dbReference>
<name>HSPQ_YERPE</name>